<dbReference type="EMBL" id="BC103299">
    <property type="protein sequence ID" value="AAI03300.1"/>
    <property type="molecule type" value="mRNA"/>
</dbReference>
<dbReference type="RefSeq" id="NP_001029608.1">
    <property type="nucleotide sequence ID" value="NM_001034436.1"/>
</dbReference>
<dbReference type="RefSeq" id="XP_024839141.1">
    <property type="nucleotide sequence ID" value="XM_024983373.2"/>
</dbReference>
<dbReference type="FunCoup" id="Q3ZBG9">
    <property type="interactions" value="1136"/>
</dbReference>
<dbReference type="STRING" id="9913.ENSBTAP00000029993"/>
<dbReference type="SwissPalm" id="Q3ZBG9"/>
<dbReference type="PaxDb" id="9913-ENSBTAP00000029993"/>
<dbReference type="Ensembl" id="ENSBTAT00000030005.5">
    <property type="protein sequence ID" value="ENSBTAP00000029993.4"/>
    <property type="gene ID" value="ENSBTAG00000022227.6"/>
</dbReference>
<dbReference type="GeneID" id="513193"/>
<dbReference type="KEGG" id="bta:513193"/>
<dbReference type="CTD" id="57047"/>
<dbReference type="VEuPathDB" id="HostDB:ENSBTAG00000022227"/>
<dbReference type="eggNOG" id="KOG0621">
    <property type="taxonomic scope" value="Eukaryota"/>
</dbReference>
<dbReference type="GeneTree" id="ENSGT00940000154435"/>
<dbReference type="HOGENOM" id="CLU_053024_2_0_1"/>
<dbReference type="InParanoid" id="Q3ZBG9"/>
<dbReference type="OMA" id="QNWHLWR"/>
<dbReference type="OrthoDB" id="191150at2759"/>
<dbReference type="TreeFam" id="TF314939"/>
<dbReference type="Proteomes" id="UP000009136">
    <property type="component" value="Chromosome 1"/>
</dbReference>
<dbReference type="Bgee" id="ENSBTAG00000022227">
    <property type="expression patterns" value="Expressed in monocyte and 107 other cell types or tissues"/>
</dbReference>
<dbReference type="GO" id="GO:0005886">
    <property type="term" value="C:plasma membrane"/>
    <property type="evidence" value="ECO:0000318"/>
    <property type="project" value="GO_Central"/>
</dbReference>
<dbReference type="GO" id="GO:0046872">
    <property type="term" value="F:metal ion binding"/>
    <property type="evidence" value="ECO:0007669"/>
    <property type="project" value="UniProtKB-KW"/>
</dbReference>
<dbReference type="GO" id="GO:0017128">
    <property type="term" value="F:phospholipid scramblase activity"/>
    <property type="evidence" value="ECO:0000250"/>
    <property type="project" value="UniProtKB"/>
</dbReference>
<dbReference type="GO" id="GO:0017121">
    <property type="term" value="P:plasma membrane phospholipid scrambling"/>
    <property type="evidence" value="ECO:0000250"/>
    <property type="project" value="UniProtKB"/>
</dbReference>
<dbReference type="InterPro" id="IPR005552">
    <property type="entry name" value="Scramblase"/>
</dbReference>
<dbReference type="PANTHER" id="PTHR23248:SF38">
    <property type="entry name" value="PHOSPHOLIPID SCRAMBLASE 1"/>
    <property type="match status" value="1"/>
</dbReference>
<dbReference type="PANTHER" id="PTHR23248">
    <property type="entry name" value="PHOSPHOLIPID SCRAMBLASE-RELATED"/>
    <property type="match status" value="1"/>
</dbReference>
<dbReference type="Pfam" id="PF03803">
    <property type="entry name" value="Scramblase"/>
    <property type="match status" value="1"/>
</dbReference>
<sequence>MDKQNVQMNPPHPGTNLTGPPGHIGYPGPQAGYAVPPPGYASPGPVGFPVQHQPVTGHPGAPTQVPWMPAPLPPLNCPPGLEYLTQIDQLLIHQQIELLEVLIGFETNNKYEIKNSLGQRIYFAAEDTDCCTRNCCGPSRPFTMRILDNMGREVITLERPLRCTSCCFPCCLQEIEIQAPPGVPVGYVTQTWHPCLPKFTIQNERREDVLRISGPCVICSCCADIDFEVKSLDDKYVVGKISKHWTGLIKELFTDVDNFGIQFPLDLDVKMKAVMLGACFLIDFMFFEMTRGE</sequence>
<organism>
    <name type="scientific">Bos taurus</name>
    <name type="common">Bovine</name>
    <dbReference type="NCBI Taxonomy" id="9913"/>
    <lineage>
        <taxon>Eukaryota</taxon>
        <taxon>Metazoa</taxon>
        <taxon>Chordata</taxon>
        <taxon>Craniata</taxon>
        <taxon>Vertebrata</taxon>
        <taxon>Euteleostomi</taxon>
        <taxon>Mammalia</taxon>
        <taxon>Eutheria</taxon>
        <taxon>Laurasiatheria</taxon>
        <taxon>Artiodactyla</taxon>
        <taxon>Ruminantia</taxon>
        <taxon>Pecora</taxon>
        <taxon>Bovidae</taxon>
        <taxon>Bovinae</taxon>
        <taxon>Bos</taxon>
    </lineage>
</organism>
<reference key="1">
    <citation type="submission" date="2005-08" db="EMBL/GenBank/DDBJ databases">
        <authorList>
            <consortium name="NIH - Mammalian Gene Collection (MGC) project"/>
        </authorList>
    </citation>
    <scope>NUCLEOTIDE SEQUENCE [LARGE SCALE MRNA]</scope>
    <source>
        <strain>Hereford</strain>
        <tissue>Uterus</tissue>
    </source>
</reference>
<protein>
    <recommendedName>
        <fullName evidence="2">Phospholipid scramblase 2</fullName>
        <shortName>PL scramblase 2</shortName>
    </recommendedName>
    <alternativeName>
        <fullName>Ca(2+)-dependent phospholipid scramblase 2</fullName>
    </alternativeName>
</protein>
<evidence type="ECO:0000250" key="1">
    <source>
        <dbReference type="UniProtKB" id="O15162"/>
    </source>
</evidence>
<evidence type="ECO:0000250" key="2">
    <source>
        <dbReference type="UniProtKB" id="Q9NRY7"/>
    </source>
</evidence>
<evidence type="ECO:0000255" key="3"/>
<evidence type="ECO:0000256" key="4">
    <source>
        <dbReference type="SAM" id="MobiDB-lite"/>
    </source>
</evidence>
<evidence type="ECO:0000305" key="5"/>
<name>PLS2_BOVIN</name>
<keyword id="KW-0106">Calcium</keyword>
<keyword id="KW-0449">Lipoprotein</keyword>
<keyword id="KW-0472">Membrane</keyword>
<keyword id="KW-0479">Metal-binding</keyword>
<keyword id="KW-0564">Palmitate</keyword>
<keyword id="KW-0597">Phosphoprotein</keyword>
<keyword id="KW-1185">Reference proteome</keyword>
<keyword id="KW-0812">Transmembrane</keyword>
<keyword id="KW-1133">Transmembrane helix</keyword>
<accession>Q3ZBG9</accession>
<gene>
    <name evidence="2" type="primary">PLSCR2</name>
</gene>
<comment type="function">
    <text evidence="2">May catalyze calcium-induced ATP-independent rapid bidirectional and non-specific movement of phospholipids (lipid scrambling or lipid flip-flop) between the inner and outer leaflet of the plasma membrane.</text>
</comment>
<comment type="catalytic activity">
    <reaction evidence="2">
        <text>a 1,2-diacyl-sn-glycero-3-phosphocholine(in) = a 1,2-diacyl-sn-glycero-3-phosphocholine(out)</text>
        <dbReference type="Rhea" id="RHEA:38571"/>
        <dbReference type="ChEBI" id="CHEBI:57643"/>
    </reaction>
</comment>
<comment type="cofactor">
    <cofactor evidence="2">
        <name>Ca(2+)</name>
        <dbReference type="ChEBI" id="CHEBI:29108"/>
    </cofactor>
</comment>
<comment type="subcellular location">
    <subcellularLocation>
        <location evidence="1">Membrane</location>
        <topology evidence="1">Single-pass type II membrane protein</topology>
    </subcellularLocation>
</comment>
<comment type="domain">
    <text evidence="2">The N-terminal proline-rich domain (PRD) is required for phospholipid scramblase activity.</text>
</comment>
<comment type="similarity">
    <text evidence="5">Belongs to the phospholipid scramblase family.</text>
</comment>
<feature type="chain" id="PRO_0000254023" description="Phospholipid scramblase 2">
    <location>
        <begin position="1"/>
        <end position="293"/>
    </location>
</feature>
<feature type="topological domain" description="Cytoplasmic" evidence="1">
    <location>
        <begin position="1"/>
        <end position="270"/>
    </location>
</feature>
<feature type="transmembrane region" description="Helical" evidence="3">
    <location>
        <begin position="271"/>
        <end position="287"/>
    </location>
</feature>
<feature type="topological domain" description="Extracellular" evidence="1">
    <location>
        <begin position="288"/>
        <end position="293"/>
    </location>
</feature>
<feature type="region of interest" description="Proline-rich domain (PRD)" evidence="1">
    <location>
        <begin position="1"/>
        <end position="66"/>
    </location>
</feature>
<feature type="region of interest" description="Disordered" evidence="4">
    <location>
        <begin position="1"/>
        <end position="39"/>
    </location>
</feature>
<feature type="modified residue" description="Phosphothreonine; by PKC" evidence="1">
    <location>
        <position position="143"/>
    </location>
</feature>
<feature type="lipid moiety-binding region" description="S-palmitoyl cysteine" evidence="1">
    <location>
        <position position="166"/>
    </location>
</feature>
<feature type="lipid moiety-binding region" description="S-palmitoyl cysteine" evidence="1">
    <location>
        <position position="167"/>
    </location>
</feature>
<feature type="lipid moiety-binding region" description="S-palmitoyl cysteine" evidence="1">
    <location>
        <position position="170"/>
    </location>
</feature>
<feature type="lipid moiety-binding region" description="S-palmitoyl cysteine" evidence="1">
    <location>
        <position position="171"/>
    </location>
</feature>
<proteinExistence type="evidence at transcript level"/>